<comment type="function">
    <text evidence="1">Nucleotidyltransferase involved in the post-translational modification of proteins. It can catalyze the addition of adenosine monophosphate (AMP) or uridine monophosphate (UMP) to a protein, resulting in modifications known as AMPylation and UMPylation.</text>
</comment>
<comment type="catalytic activity">
    <reaction evidence="1">
        <text>L-seryl-[protein] + ATP = 3-O-(5'-adenylyl)-L-seryl-[protein] + diphosphate</text>
        <dbReference type="Rhea" id="RHEA:58120"/>
        <dbReference type="Rhea" id="RHEA-COMP:9863"/>
        <dbReference type="Rhea" id="RHEA-COMP:15073"/>
        <dbReference type="ChEBI" id="CHEBI:29999"/>
        <dbReference type="ChEBI" id="CHEBI:30616"/>
        <dbReference type="ChEBI" id="CHEBI:33019"/>
        <dbReference type="ChEBI" id="CHEBI:142516"/>
        <dbReference type="EC" id="2.7.7.108"/>
    </reaction>
</comment>
<comment type="catalytic activity">
    <reaction evidence="1">
        <text>L-threonyl-[protein] + ATP = 3-O-(5'-adenylyl)-L-threonyl-[protein] + diphosphate</text>
        <dbReference type="Rhea" id="RHEA:54292"/>
        <dbReference type="Rhea" id="RHEA-COMP:11060"/>
        <dbReference type="Rhea" id="RHEA-COMP:13847"/>
        <dbReference type="ChEBI" id="CHEBI:30013"/>
        <dbReference type="ChEBI" id="CHEBI:30616"/>
        <dbReference type="ChEBI" id="CHEBI:33019"/>
        <dbReference type="ChEBI" id="CHEBI:138113"/>
        <dbReference type="EC" id="2.7.7.108"/>
    </reaction>
</comment>
<comment type="catalytic activity">
    <reaction evidence="1">
        <text>L-tyrosyl-[protein] + ATP = O-(5'-adenylyl)-L-tyrosyl-[protein] + diphosphate</text>
        <dbReference type="Rhea" id="RHEA:54288"/>
        <dbReference type="Rhea" id="RHEA-COMP:10136"/>
        <dbReference type="Rhea" id="RHEA-COMP:13846"/>
        <dbReference type="ChEBI" id="CHEBI:30616"/>
        <dbReference type="ChEBI" id="CHEBI:33019"/>
        <dbReference type="ChEBI" id="CHEBI:46858"/>
        <dbReference type="ChEBI" id="CHEBI:83624"/>
        <dbReference type="EC" id="2.7.7.108"/>
    </reaction>
</comment>
<comment type="catalytic activity">
    <reaction evidence="1">
        <text>L-histidyl-[protein] + UTP = N(tele)-(5'-uridylyl)-L-histidyl-[protein] + diphosphate</text>
        <dbReference type="Rhea" id="RHEA:83891"/>
        <dbReference type="Rhea" id="RHEA-COMP:9745"/>
        <dbReference type="Rhea" id="RHEA-COMP:20239"/>
        <dbReference type="ChEBI" id="CHEBI:29979"/>
        <dbReference type="ChEBI" id="CHEBI:33019"/>
        <dbReference type="ChEBI" id="CHEBI:46398"/>
        <dbReference type="ChEBI" id="CHEBI:233474"/>
    </reaction>
</comment>
<comment type="catalytic activity">
    <reaction evidence="1">
        <text>L-seryl-[protein] + UTP = O-(5'-uridylyl)-L-seryl-[protein] + diphosphate</text>
        <dbReference type="Rhea" id="RHEA:64604"/>
        <dbReference type="Rhea" id="RHEA-COMP:9863"/>
        <dbReference type="Rhea" id="RHEA-COMP:16635"/>
        <dbReference type="ChEBI" id="CHEBI:29999"/>
        <dbReference type="ChEBI" id="CHEBI:33019"/>
        <dbReference type="ChEBI" id="CHEBI:46398"/>
        <dbReference type="ChEBI" id="CHEBI:156051"/>
    </reaction>
</comment>
<comment type="catalytic activity">
    <reaction evidence="1">
        <text>L-tyrosyl-[protein] + UTP = O-(5'-uridylyl)-L-tyrosyl-[protein] + diphosphate</text>
        <dbReference type="Rhea" id="RHEA:83887"/>
        <dbReference type="Rhea" id="RHEA-COMP:10136"/>
        <dbReference type="Rhea" id="RHEA-COMP:20238"/>
        <dbReference type="ChEBI" id="CHEBI:33019"/>
        <dbReference type="ChEBI" id="CHEBI:46398"/>
        <dbReference type="ChEBI" id="CHEBI:46858"/>
        <dbReference type="ChEBI" id="CHEBI:90602"/>
    </reaction>
</comment>
<comment type="cofactor">
    <cofactor evidence="1">
        <name>Mg(2+)</name>
        <dbReference type="ChEBI" id="CHEBI:18420"/>
    </cofactor>
    <cofactor evidence="1">
        <name>Mn(2+)</name>
        <dbReference type="ChEBI" id="CHEBI:29035"/>
    </cofactor>
</comment>
<comment type="similarity">
    <text evidence="1">Belongs to the SELO family.</text>
</comment>
<accession>B7VL54</accession>
<dbReference type="EC" id="2.7.7.-" evidence="1"/>
<dbReference type="EC" id="2.7.7.108" evidence="1"/>
<dbReference type="EMBL" id="FM954972">
    <property type="protein sequence ID" value="CAV17878.1"/>
    <property type="molecule type" value="Genomic_DNA"/>
</dbReference>
<dbReference type="SMR" id="B7VL54"/>
<dbReference type="STRING" id="575788.VS_0872"/>
<dbReference type="KEGG" id="vsp:VS_0872"/>
<dbReference type="PATRIC" id="fig|575788.5.peg.2199"/>
<dbReference type="eggNOG" id="COG0397">
    <property type="taxonomic scope" value="Bacteria"/>
</dbReference>
<dbReference type="HOGENOM" id="CLU_010245_4_0_6"/>
<dbReference type="Proteomes" id="UP000009100">
    <property type="component" value="Chromosome 1"/>
</dbReference>
<dbReference type="GO" id="GO:0070733">
    <property type="term" value="F:AMPylase activity"/>
    <property type="evidence" value="ECO:0007669"/>
    <property type="project" value="TreeGrafter"/>
</dbReference>
<dbReference type="GO" id="GO:0005524">
    <property type="term" value="F:ATP binding"/>
    <property type="evidence" value="ECO:0007669"/>
    <property type="project" value="UniProtKB-UniRule"/>
</dbReference>
<dbReference type="GO" id="GO:0000287">
    <property type="term" value="F:magnesium ion binding"/>
    <property type="evidence" value="ECO:0007669"/>
    <property type="project" value="UniProtKB-UniRule"/>
</dbReference>
<dbReference type="HAMAP" id="MF_00692">
    <property type="entry name" value="YdiU_SelO"/>
    <property type="match status" value="1"/>
</dbReference>
<dbReference type="InterPro" id="IPR003846">
    <property type="entry name" value="SelO"/>
</dbReference>
<dbReference type="NCBIfam" id="NF000658">
    <property type="entry name" value="PRK00029.1"/>
    <property type="match status" value="1"/>
</dbReference>
<dbReference type="PANTHER" id="PTHR32057">
    <property type="entry name" value="PROTEIN ADENYLYLTRANSFERASE SELO, MITOCHONDRIAL"/>
    <property type="match status" value="1"/>
</dbReference>
<dbReference type="PANTHER" id="PTHR32057:SF14">
    <property type="entry name" value="PROTEIN ADENYLYLTRANSFERASE SELO, MITOCHONDRIAL"/>
    <property type="match status" value="1"/>
</dbReference>
<dbReference type="Pfam" id="PF02696">
    <property type="entry name" value="SelO"/>
    <property type="match status" value="1"/>
</dbReference>
<name>SELO_VIBA3</name>
<keyword id="KW-0067">ATP-binding</keyword>
<keyword id="KW-0460">Magnesium</keyword>
<keyword id="KW-0464">Manganese</keyword>
<keyword id="KW-0479">Metal-binding</keyword>
<keyword id="KW-0547">Nucleotide-binding</keyword>
<keyword id="KW-0548">Nucleotidyltransferase</keyword>
<keyword id="KW-0808">Transferase</keyword>
<gene>
    <name evidence="1" type="primary">ydiU</name>
    <name evidence="1" type="synonym">selO</name>
    <name type="ordered locus">VS_0872</name>
</gene>
<organism>
    <name type="scientific">Vibrio atlanticus (strain LGP32)</name>
    <name type="common">Vibrio splendidus (strain Mel32)</name>
    <dbReference type="NCBI Taxonomy" id="575788"/>
    <lineage>
        <taxon>Bacteria</taxon>
        <taxon>Pseudomonadati</taxon>
        <taxon>Pseudomonadota</taxon>
        <taxon>Gammaproteobacteria</taxon>
        <taxon>Vibrionales</taxon>
        <taxon>Vibrionaceae</taxon>
        <taxon>Vibrio</taxon>
    </lineage>
</organism>
<proteinExistence type="inferred from homology"/>
<protein>
    <recommendedName>
        <fullName evidence="1">Protein nucleotidyltransferase YdiU</fullName>
        <ecNumber evidence="1">2.7.7.-</ecNumber>
    </recommendedName>
    <alternativeName>
        <fullName evidence="1">Protein adenylyltransferase YdiU</fullName>
        <ecNumber evidence="1">2.7.7.108</ecNumber>
    </alternativeName>
    <alternativeName>
        <fullName evidence="1">Protein uridylyltransferase YdiU</fullName>
        <ecNumber evidence="1">2.7.7.-</ecNumber>
    </alternativeName>
</protein>
<reference key="1">
    <citation type="submission" date="2009-02" db="EMBL/GenBank/DDBJ databases">
        <title>Vibrio splendidus str. LGP32 complete genome.</title>
        <authorList>
            <person name="Mazel D."/>
            <person name="Le Roux F."/>
        </authorList>
    </citation>
    <scope>NUCLEOTIDE SEQUENCE [LARGE SCALE GENOMIC DNA]</scope>
    <source>
        <strain>LGP32</strain>
    </source>
</reference>
<sequence>MSVWDSISFNNRFTALPRLFYTPIQPTPLNNVQWLAWNHNLANELGFPSFECTSEELLETLSGNVEPEQFSPVAMKYAGHQFGSYNPDLGDGRGLLLAQVVAKSGETFDLHLKGAGKTPYSRMGDGRAVIRSTVREYLCSEAMAGLNIPTTRALAMMTSDTPVYREKQEWGALLVRAAESHIRFGHFEHLFYTNQLAEHKLLADKVIEWHFPECLDDDKPYAAMFNQIVDRTAEMVALWQANGFAHGVMNTDNMSIIGQTFDYGPFAFLDEYDPRLICNHSDYQGRYAFNQQPRIGLWNLSALAHSLSPLVDKADLEAALEQYEPQMNGYFSQLMRRKLGLLSKHEGDSRLFESMFELMSQNKVDYPRFFRTLSNLDTLLPQDVIDLVIDREAAKLWVDNYLQRCELEESSVAERCEKMRQVNPKYILRNYLAQLAIDKAERGDSSDIDALMVVLADPYAEHPDYEHLAALPPEWGKAMEISCSS</sequence>
<feature type="chain" id="PRO_1000200068" description="Protein nucleotidyltransferase YdiU">
    <location>
        <begin position="1"/>
        <end position="485"/>
    </location>
</feature>
<feature type="active site" description="Proton acceptor" evidence="1">
    <location>
        <position position="252"/>
    </location>
</feature>
<feature type="binding site" evidence="1">
    <location>
        <position position="90"/>
    </location>
    <ligand>
        <name>ATP</name>
        <dbReference type="ChEBI" id="CHEBI:30616"/>
    </ligand>
</feature>
<feature type="binding site" evidence="1">
    <location>
        <position position="92"/>
    </location>
    <ligand>
        <name>ATP</name>
        <dbReference type="ChEBI" id="CHEBI:30616"/>
    </ligand>
</feature>
<feature type="binding site" evidence="1">
    <location>
        <position position="93"/>
    </location>
    <ligand>
        <name>ATP</name>
        <dbReference type="ChEBI" id="CHEBI:30616"/>
    </ligand>
</feature>
<feature type="binding site" evidence="1">
    <location>
        <position position="113"/>
    </location>
    <ligand>
        <name>ATP</name>
        <dbReference type="ChEBI" id="CHEBI:30616"/>
    </ligand>
</feature>
<feature type="binding site" evidence="1">
    <location>
        <position position="125"/>
    </location>
    <ligand>
        <name>ATP</name>
        <dbReference type="ChEBI" id="CHEBI:30616"/>
    </ligand>
</feature>
<feature type="binding site" evidence="1">
    <location>
        <position position="126"/>
    </location>
    <ligand>
        <name>ATP</name>
        <dbReference type="ChEBI" id="CHEBI:30616"/>
    </ligand>
</feature>
<feature type="binding site" evidence="1">
    <location>
        <position position="176"/>
    </location>
    <ligand>
        <name>ATP</name>
        <dbReference type="ChEBI" id="CHEBI:30616"/>
    </ligand>
</feature>
<feature type="binding site" evidence="1">
    <location>
        <position position="183"/>
    </location>
    <ligand>
        <name>ATP</name>
        <dbReference type="ChEBI" id="CHEBI:30616"/>
    </ligand>
</feature>
<feature type="binding site" evidence="1">
    <location>
        <position position="253"/>
    </location>
    <ligand>
        <name>Mg(2+)</name>
        <dbReference type="ChEBI" id="CHEBI:18420"/>
    </ligand>
</feature>
<feature type="binding site" evidence="1">
    <location>
        <position position="262"/>
    </location>
    <ligand>
        <name>ATP</name>
        <dbReference type="ChEBI" id="CHEBI:30616"/>
    </ligand>
</feature>
<feature type="binding site" evidence="1">
    <location>
        <position position="262"/>
    </location>
    <ligand>
        <name>Mg(2+)</name>
        <dbReference type="ChEBI" id="CHEBI:18420"/>
    </ligand>
</feature>
<evidence type="ECO:0000255" key="1">
    <source>
        <dbReference type="HAMAP-Rule" id="MF_00692"/>
    </source>
</evidence>